<keyword id="KW-0325">Glycoprotein</keyword>
<keyword id="KW-0472">Membrane</keyword>
<keyword id="KW-1185">Reference proteome</keyword>
<keyword id="KW-0732">Signal</keyword>
<keyword id="KW-0812">Transmembrane</keyword>
<keyword id="KW-1133">Transmembrane helix</keyword>
<proteinExistence type="evidence at protein level"/>
<gene>
    <name type="ORF">F54D1.6</name>
</gene>
<feature type="signal peptide" evidence="1">
    <location>
        <begin position="1"/>
        <end position="28"/>
    </location>
</feature>
<feature type="chain" id="PRO_0000014285" description="Uncharacterized protein F54D1.6">
    <location>
        <begin position="29"/>
        <end position="1423"/>
    </location>
</feature>
<feature type="topological domain" description="Extracellular" evidence="1">
    <location>
        <begin position="29"/>
        <end position="1321"/>
    </location>
</feature>
<feature type="transmembrane region" description="Helical" evidence="1">
    <location>
        <begin position="1322"/>
        <end position="1342"/>
    </location>
</feature>
<feature type="topological domain" description="Cytoplasmic" evidence="1">
    <location>
        <begin position="1343"/>
        <end position="1423"/>
    </location>
</feature>
<feature type="domain" description="NIDO" evidence="3">
    <location>
        <begin position="184"/>
        <end position="347"/>
    </location>
</feature>
<feature type="domain" description="AMOP" evidence="2">
    <location>
        <begin position="638"/>
        <end position="818"/>
    </location>
</feature>
<feature type="region of interest" description="Disordered" evidence="4">
    <location>
        <begin position="1364"/>
        <end position="1401"/>
    </location>
</feature>
<feature type="compositionally biased region" description="Basic and acidic residues" evidence="4">
    <location>
        <begin position="1378"/>
        <end position="1401"/>
    </location>
</feature>
<feature type="glycosylation site" description="N-linked (GlcNAc...) asparagine" evidence="1">
    <location>
        <position position="94"/>
    </location>
</feature>
<feature type="glycosylation site" description="N-linked (GlcNAc...) asparagine" evidence="5">
    <location>
        <position position="306"/>
    </location>
</feature>
<feature type="glycosylation site" description="N-linked (GlcNAc...) asparagine" evidence="5 6">
    <location>
        <position position="355"/>
    </location>
</feature>
<feature type="glycosylation site" description="N-linked (GlcNAc...) asparagine" evidence="5">
    <location>
        <position position="483"/>
    </location>
</feature>
<feature type="glycosylation site" description="N-linked (GlcNAc...) asparagine" evidence="5 6">
    <location>
        <position position="666"/>
    </location>
</feature>
<feature type="glycosylation site" description="N-linked (GlcNAc...) asparagine" evidence="6">
    <location>
        <position position="903"/>
    </location>
</feature>
<dbReference type="EMBL" id="Z77132">
    <property type="protein sequence ID" value="CAB00863.2"/>
    <property type="molecule type" value="Genomic_DNA"/>
</dbReference>
<dbReference type="PIR" id="T22643">
    <property type="entry name" value="T22643"/>
</dbReference>
<dbReference type="RefSeq" id="NP_502119.2">
    <property type="nucleotide sequence ID" value="NM_069718.5"/>
</dbReference>
<dbReference type="SMR" id="Q20762"/>
<dbReference type="BioGRID" id="43136">
    <property type="interactions" value="1"/>
</dbReference>
<dbReference type="FunCoup" id="Q20762">
    <property type="interactions" value="43"/>
</dbReference>
<dbReference type="STRING" id="6239.F54D1.6.2"/>
<dbReference type="iPTMnet" id="Q20762"/>
<dbReference type="PaxDb" id="6239-F54D1.6"/>
<dbReference type="PeptideAtlas" id="Q20762"/>
<dbReference type="EnsemblMetazoa" id="F54D1.6.1">
    <property type="protein sequence ID" value="F54D1.6.1"/>
    <property type="gene ID" value="WBGene00010047"/>
</dbReference>
<dbReference type="GeneID" id="178037"/>
<dbReference type="KEGG" id="cel:CELE_F54D1.6"/>
<dbReference type="UCSC" id="F54D1.6">
    <property type="organism name" value="c. elegans"/>
</dbReference>
<dbReference type="AGR" id="WB:WBGene00010047"/>
<dbReference type="CTD" id="178037"/>
<dbReference type="WormBase" id="F54D1.6">
    <property type="protein sequence ID" value="CE37523"/>
    <property type="gene ID" value="WBGene00010047"/>
</dbReference>
<dbReference type="eggNOG" id="KOG4291">
    <property type="taxonomic scope" value="Eukaryota"/>
</dbReference>
<dbReference type="GeneTree" id="ENSGT00730000110943"/>
<dbReference type="HOGENOM" id="CLU_004798_0_0_1"/>
<dbReference type="InParanoid" id="Q20762"/>
<dbReference type="OMA" id="FIFLCCW"/>
<dbReference type="OrthoDB" id="9972657at2759"/>
<dbReference type="PhylomeDB" id="Q20762"/>
<dbReference type="PRO" id="PR:Q20762"/>
<dbReference type="Proteomes" id="UP000001940">
    <property type="component" value="Chromosome IV"/>
</dbReference>
<dbReference type="Bgee" id="WBGene00010047">
    <property type="expression patterns" value="Expressed in pharyngeal muscle cell (C elegans) and 3 other cell types or tissues"/>
</dbReference>
<dbReference type="GO" id="GO:0005615">
    <property type="term" value="C:extracellular space"/>
    <property type="evidence" value="ECO:0000318"/>
    <property type="project" value="GO_Central"/>
</dbReference>
<dbReference type="GO" id="GO:0016020">
    <property type="term" value="C:membrane"/>
    <property type="evidence" value="ECO:0007669"/>
    <property type="project" value="UniProtKB-SubCell"/>
</dbReference>
<dbReference type="GO" id="GO:0007160">
    <property type="term" value="P:cell-matrix adhesion"/>
    <property type="evidence" value="ECO:0007669"/>
    <property type="project" value="InterPro"/>
</dbReference>
<dbReference type="InterPro" id="IPR005533">
    <property type="entry name" value="AMOP_dom"/>
</dbReference>
<dbReference type="InterPro" id="IPR056075">
    <property type="entry name" value="DUF7658"/>
</dbReference>
<dbReference type="InterPro" id="IPR051495">
    <property type="entry name" value="Epithelial_Barrier/Signaling"/>
</dbReference>
<dbReference type="InterPro" id="IPR057017">
    <property type="entry name" value="F54D1_6-like_C"/>
</dbReference>
<dbReference type="InterPro" id="IPR057018">
    <property type="entry name" value="F54D1_6-like_Ig-like"/>
</dbReference>
<dbReference type="InterPro" id="IPR057019">
    <property type="entry name" value="F54D1_6-like_Ig-like_2"/>
</dbReference>
<dbReference type="InterPro" id="IPR003886">
    <property type="entry name" value="NIDO_dom"/>
</dbReference>
<dbReference type="PANTHER" id="PTHR13802">
    <property type="entry name" value="MUCIN 4-RELATED"/>
    <property type="match status" value="1"/>
</dbReference>
<dbReference type="PANTHER" id="PTHR13802:SF60">
    <property type="entry name" value="PROTEIN CBG06057"/>
    <property type="match status" value="1"/>
</dbReference>
<dbReference type="Pfam" id="PF03782">
    <property type="entry name" value="AMOP"/>
    <property type="match status" value="1"/>
</dbReference>
<dbReference type="Pfam" id="PF24678">
    <property type="entry name" value="DUF7658"/>
    <property type="match status" value="1"/>
</dbReference>
<dbReference type="Pfam" id="PF24469">
    <property type="entry name" value="F54D1_6_C"/>
    <property type="match status" value="1"/>
</dbReference>
<dbReference type="Pfam" id="PF24462">
    <property type="entry name" value="Ig_F54D1_6"/>
    <property type="match status" value="1"/>
</dbReference>
<dbReference type="Pfam" id="PF24464">
    <property type="entry name" value="Ig_F54D1_6_2"/>
    <property type="match status" value="1"/>
</dbReference>
<dbReference type="Pfam" id="PF06119">
    <property type="entry name" value="NIDO"/>
    <property type="match status" value="1"/>
</dbReference>
<dbReference type="SMART" id="SM00723">
    <property type="entry name" value="AMOP"/>
    <property type="match status" value="1"/>
</dbReference>
<dbReference type="SMART" id="SM00539">
    <property type="entry name" value="NIDO"/>
    <property type="match status" value="1"/>
</dbReference>
<dbReference type="PROSITE" id="PS50856">
    <property type="entry name" value="AMOP"/>
    <property type="match status" value="1"/>
</dbReference>
<dbReference type="PROSITE" id="PS51220">
    <property type="entry name" value="NIDO"/>
    <property type="match status" value="1"/>
</dbReference>
<organism>
    <name type="scientific">Caenorhabditis elegans</name>
    <dbReference type="NCBI Taxonomy" id="6239"/>
    <lineage>
        <taxon>Eukaryota</taxon>
        <taxon>Metazoa</taxon>
        <taxon>Ecdysozoa</taxon>
        <taxon>Nematoda</taxon>
        <taxon>Chromadorea</taxon>
        <taxon>Rhabditida</taxon>
        <taxon>Rhabditina</taxon>
        <taxon>Rhabditomorpha</taxon>
        <taxon>Rhabditoidea</taxon>
        <taxon>Rhabditidae</taxon>
        <taxon>Peloderinae</taxon>
        <taxon>Caenorhabditis</taxon>
    </lineage>
</organism>
<accession>Q20762</accession>
<reference key="1">
    <citation type="journal article" date="1998" name="Science">
        <title>Genome sequence of the nematode C. elegans: a platform for investigating biology.</title>
        <authorList>
            <consortium name="The C. elegans sequencing consortium"/>
        </authorList>
    </citation>
    <scope>NUCLEOTIDE SEQUENCE [LARGE SCALE GENOMIC DNA]</scope>
    <source>
        <strain>Bristol N2</strain>
    </source>
</reference>
<reference key="2">
    <citation type="journal article" date="2005" name="Glycobiology">
        <title>Identification of the hydrophobic glycoproteins of Caenorhabditis elegans.</title>
        <authorList>
            <person name="Fan X."/>
            <person name="She Y.-M."/>
            <person name="Bagshaw R.D."/>
            <person name="Callahan J.W."/>
            <person name="Schachter H."/>
            <person name="Mahuran D.J."/>
        </authorList>
    </citation>
    <scope>GLYCOSYLATION [LARGE SCALE ANALYSIS] AT ASN-306; ASN-355; ASN-483 AND ASN-666</scope>
    <scope>IDENTIFICATION BY MASS SPECTROMETRY</scope>
</reference>
<reference key="3">
    <citation type="journal article" date="2007" name="Mol. Cell. Proteomics">
        <title>Proteomics reveals N-linked glycoprotein diversity in Caenorhabditis elegans and suggests an atypical translocation mechanism for integral membrane proteins.</title>
        <authorList>
            <person name="Kaji H."/>
            <person name="Kamiie J."/>
            <person name="Kawakami H."/>
            <person name="Kido K."/>
            <person name="Yamauchi Y."/>
            <person name="Shinkawa T."/>
            <person name="Taoka M."/>
            <person name="Takahashi N."/>
            <person name="Isobe T."/>
        </authorList>
    </citation>
    <scope>GLYCOSYLATION [LARGE SCALE ANALYSIS] AT ASN-355; ASN-666 AND ASN-903</scope>
    <scope>IDENTIFICATION BY MASS SPECTROMETRY</scope>
    <source>
        <strain>Bristol N2</strain>
    </source>
</reference>
<name>YAO6_CAEEL</name>
<comment type="subcellular location">
    <subcellularLocation>
        <location evidence="7">Membrane</location>
        <topology evidence="7">Single-pass membrane protein</topology>
    </subcellularLocation>
</comment>
<evidence type="ECO:0000255" key="1"/>
<evidence type="ECO:0000255" key="2">
    <source>
        <dbReference type="PROSITE-ProRule" id="PRU00347"/>
    </source>
</evidence>
<evidence type="ECO:0000255" key="3">
    <source>
        <dbReference type="PROSITE-ProRule" id="PRU00570"/>
    </source>
</evidence>
<evidence type="ECO:0000256" key="4">
    <source>
        <dbReference type="SAM" id="MobiDB-lite"/>
    </source>
</evidence>
<evidence type="ECO:0000269" key="5">
    <source>
    </source>
</evidence>
<evidence type="ECO:0000269" key="6">
    <source>
    </source>
</evidence>
<evidence type="ECO:0000305" key="7"/>
<protein>
    <recommendedName>
        <fullName>Uncharacterized protein F54D1.6</fullName>
    </recommendedName>
</protein>
<sequence>MTSSVRLAFLATLLLLLPLEAQIQQANSANVNQNVGQQDTGTLFTGTGTNLYYGVNLVPFGPEVGDQEVNPGLLTAGQTIDLHMYFPFYGGLYNYSTLSVNGYIGFATVLDQGPTLNVGPDMTDWPRHEDPAMIAPYLCKQQIPQNLNPGMRSGVFYRLMMRQSLFGRQTGSNMNMGQATYQSSFFGQSASKACPGTPDSYVRCDSQADYFLEEMQRWLIEGVAGAAAFRADAALVVTWYNTASAISGRSDIDSGQLATYQAIWLTDRTARLSYVILNYDRLGFDAADFRQNSRSGRCQALFNGGNHTGLVPVDPTQDFKNTPKVLAQRSGVPQMVRGRYMFRVDDVVRPAGCSNKTGGTYPMLIYPNIVNMLGEMTVDVNAICLDKSQTYILMIEQRQTATCTVLTSAIARCNLPKIFDWGTKTVYFQPQSGGANDEKAFVGYIYFVPPTLDPMRLDIGNVYDWFKNPLPYTTMPLVWYPRNFTNPEMTQHMDQVRMNDDTLYSTQLGLYVIAYREYKDDTIKKFRPEHRVICRLATYSNRNTYEYRWKPQEERINLYQVEQWYMNDWERQNDLYHYRFGYLKLAPLKTNQEQNPQQLLSGLVSSPISLHFLWTSNNPQFATTTYSQQDESARTEYVKKKSLEMCHDWYDEDGAQWNFIRDTETNSSCPCIERQAIADIGRFMPHPRCSQAFRDITCTTSIGSRNCYMSSQNVMTTYAGDGRQYNENLARFPTHYGQVCCYDDQGHLMQTSYQPVIKVTPEVPYNPGFPMRAYEFGTAPYMGQYEVPGLSAFHNDYMPYFLCCKFADFRCQMFYWRRPSSGCQEYQPPAYGEVMGAGTFNTIDNDKFIFNEPGVYNGLYIPHTLSTPEVKVQIRMERYPNRRVDFSLLGRYMAQQDLVQPTNATVVTGVVLEATGTDRVHVVARKDTRRFRYRTSIIVGNILRYFDTMRIQRFKGVMIYVNNVERGQPEIYVVLEEAQIGIRVRESYAIDIDRLSEYQESMGILNIAVSVPPQYGVRPDGDKTREQEIRQRYNLPRVSGVFRPFPDQSSGSYLNTLTLNDVNSETYRQQIINMYRVQGSGEPGSDQNINNQGNNYGMPTENMFTTSRDEDKKFEVFPEAQMKSGPIFKTSPKYETGAYRFYPMTGQVLNQRLQTCRDMQQNTNINMQPLQSQLTGEYGQTQCPDNPSSIIQDCGDSVPCLYDYYNFNAKLLGLNVKNEWNTFTSDRFDASRQYNSCGVINIEYPEYLMKTSSMSSAYLQGDVARFECFQSHWIYGVHEYKCGIVVDRNQRNIIDPRDYRFEWNKGEQPWCRSREKQNFLTWLAIIGGIFGVLVFVILIFLCCWIVKQKKKGEAAERRGYDMASRSSMTGSRGGKKYPIHESEPLNEKRFDADTYRDDDFYPPAREEQYAARNEDLHGLKTSV</sequence>